<accession>C4R4R8</accession>
<keyword id="KW-0028">Amino-acid biosynthesis</keyword>
<keyword id="KW-0057">Aromatic amino acid biosynthesis</keyword>
<keyword id="KW-0067">ATP-binding</keyword>
<keyword id="KW-0963">Cytoplasm</keyword>
<keyword id="KW-0418">Kinase</keyword>
<keyword id="KW-0456">Lyase</keyword>
<keyword id="KW-0479">Metal-binding</keyword>
<keyword id="KW-0511">Multifunctional enzyme</keyword>
<keyword id="KW-0521">NADP</keyword>
<keyword id="KW-0547">Nucleotide-binding</keyword>
<keyword id="KW-0560">Oxidoreductase</keyword>
<keyword id="KW-1185">Reference proteome</keyword>
<keyword id="KW-0808">Transferase</keyword>
<keyword id="KW-0862">Zinc</keyword>
<reference key="1">
    <citation type="journal article" date="2009" name="Nat. Biotechnol.">
        <title>Genome sequence of the recombinant protein production host Pichia pastoris.</title>
        <authorList>
            <person name="De Schutter K."/>
            <person name="Lin Y.-C."/>
            <person name="Tiels P."/>
            <person name="Van Hecke A."/>
            <person name="Glinka S."/>
            <person name="Weber-Lehmann J."/>
            <person name="Rouze P."/>
            <person name="Van de Peer Y."/>
            <person name="Callewaert N."/>
        </authorList>
    </citation>
    <scope>NUCLEOTIDE SEQUENCE [LARGE SCALE GENOMIC DNA]</scope>
    <source>
        <strain>GS115 / ATCC 20864</strain>
    </source>
</reference>
<feature type="chain" id="PRO_0000406735" description="Pentafunctional AROM polypeptide">
    <location>
        <begin position="1"/>
        <end position="1545"/>
    </location>
</feature>
<feature type="region of interest" description="3-dehydroquinate synthase">
    <location>
        <begin position="1"/>
        <end position="383"/>
    </location>
</feature>
<feature type="region of interest" description="EPSP synthase">
    <location>
        <begin position="396"/>
        <end position="840"/>
    </location>
</feature>
<feature type="region of interest" description="Shikimate kinase">
    <location>
        <begin position="859"/>
        <end position="1049"/>
    </location>
</feature>
<feature type="region of interest" description="3-dehydroquinase">
    <location>
        <begin position="1050"/>
        <end position="1261"/>
    </location>
</feature>
<feature type="region of interest" description="Shikimate dehydrogenase">
    <location>
        <begin position="1274"/>
        <end position="1545"/>
    </location>
</feature>
<feature type="active site" description="Proton acceptor; for 3-dehydroquinate synthase activity" evidence="1">
    <location>
        <position position="259"/>
    </location>
</feature>
<feature type="active site" description="Proton acceptor; for 3-dehydroquinate synthase activity" evidence="1">
    <location>
        <position position="274"/>
    </location>
</feature>
<feature type="active site" description="For EPSP synthase activity" evidence="1">
    <location>
        <position position="822"/>
    </location>
</feature>
<feature type="active site" description="Proton acceptor; for 3-dehydroquinate dehydratase activity" evidence="1">
    <location>
        <position position="1166"/>
    </location>
</feature>
<feature type="active site" description="Schiff-base intermediate with substrate; for 3-dehydroquinate dehydratase activity" evidence="1">
    <location>
        <position position="1195"/>
    </location>
</feature>
<feature type="binding site" evidence="1">
    <location>
        <begin position="44"/>
        <end position="46"/>
    </location>
    <ligand>
        <name>NAD(+)</name>
        <dbReference type="ChEBI" id="CHEBI:57540"/>
    </ligand>
</feature>
<feature type="binding site" evidence="1">
    <location>
        <begin position="82"/>
        <end position="85"/>
    </location>
    <ligand>
        <name>NAD(+)</name>
        <dbReference type="ChEBI" id="CHEBI:57540"/>
    </ligand>
</feature>
<feature type="binding site" evidence="1">
    <location>
        <begin position="113"/>
        <end position="115"/>
    </location>
    <ligand>
        <name>NAD(+)</name>
        <dbReference type="ChEBI" id="CHEBI:57540"/>
    </ligand>
</feature>
<feature type="binding site" evidence="1">
    <location>
        <position position="118"/>
    </location>
    <ligand>
        <name>NAD(+)</name>
        <dbReference type="ChEBI" id="CHEBI:57540"/>
    </ligand>
</feature>
<feature type="binding site" evidence="1">
    <location>
        <position position="129"/>
    </location>
    <ligand>
        <name>7-phospho-2-dehydro-3-deoxy-D-arabino-heptonate</name>
        <dbReference type="ChEBI" id="CHEBI:58394"/>
    </ligand>
</feature>
<feature type="binding site" evidence="1">
    <location>
        <begin position="138"/>
        <end position="139"/>
    </location>
    <ligand>
        <name>NAD(+)</name>
        <dbReference type="ChEBI" id="CHEBI:57540"/>
    </ligand>
</feature>
<feature type="binding site" evidence="1">
    <location>
        <position position="145"/>
    </location>
    <ligand>
        <name>7-phospho-2-dehydro-3-deoxy-D-arabino-heptonate</name>
        <dbReference type="ChEBI" id="CHEBI:58394"/>
    </ligand>
</feature>
<feature type="binding site" evidence="1">
    <location>
        <position position="151"/>
    </location>
    <ligand>
        <name>7-phospho-2-dehydro-3-deoxy-D-arabino-heptonate</name>
        <dbReference type="ChEBI" id="CHEBI:58394"/>
    </ligand>
</feature>
<feature type="binding site" evidence="1">
    <location>
        <position position="160"/>
    </location>
    <ligand>
        <name>NAD(+)</name>
        <dbReference type="ChEBI" id="CHEBI:57540"/>
    </ligand>
</feature>
<feature type="binding site" evidence="1">
    <location>
        <position position="161"/>
    </location>
    <ligand>
        <name>7-phospho-2-dehydro-3-deoxy-D-arabino-heptonate</name>
        <dbReference type="ChEBI" id="CHEBI:58394"/>
    </ligand>
</feature>
<feature type="binding site" evidence="1">
    <location>
        <begin position="178"/>
        <end position="181"/>
    </location>
    <ligand>
        <name>NAD(+)</name>
        <dbReference type="ChEBI" id="CHEBI:57540"/>
    </ligand>
</feature>
<feature type="binding site" evidence="1">
    <location>
        <position position="189"/>
    </location>
    <ligand>
        <name>NAD(+)</name>
        <dbReference type="ChEBI" id="CHEBI:57540"/>
    </ligand>
</feature>
<feature type="binding site" evidence="1">
    <location>
        <begin position="193"/>
        <end position="196"/>
    </location>
    <ligand>
        <name>7-phospho-2-dehydro-3-deoxy-D-arabino-heptonate</name>
        <dbReference type="ChEBI" id="CHEBI:58394"/>
    </ligand>
</feature>
<feature type="binding site" evidence="1">
    <location>
        <position position="193"/>
    </location>
    <ligand>
        <name>Zn(2+)</name>
        <dbReference type="ChEBI" id="CHEBI:29105"/>
        <note>catalytic</note>
    </ligand>
</feature>
<feature type="binding site" evidence="1">
    <location>
        <position position="249"/>
    </location>
    <ligand>
        <name>7-phospho-2-dehydro-3-deoxy-D-arabino-heptonate</name>
        <dbReference type="ChEBI" id="CHEBI:58394"/>
    </ligand>
</feature>
<feature type="binding site" evidence="1">
    <location>
        <begin position="263"/>
        <end position="267"/>
    </location>
    <ligand>
        <name>7-phospho-2-dehydro-3-deoxy-D-arabino-heptonate</name>
        <dbReference type="ChEBI" id="CHEBI:58394"/>
    </ligand>
</feature>
<feature type="binding site" evidence="1">
    <location>
        <position position="270"/>
    </location>
    <ligand>
        <name>7-phospho-2-dehydro-3-deoxy-D-arabino-heptonate</name>
        <dbReference type="ChEBI" id="CHEBI:58394"/>
    </ligand>
</feature>
<feature type="binding site" evidence="1">
    <location>
        <position position="270"/>
    </location>
    <ligand>
        <name>Zn(2+)</name>
        <dbReference type="ChEBI" id="CHEBI:29105"/>
        <note>catalytic</note>
    </ligand>
</feature>
<feature type="binding site" evidence="1">
    <location>
        <position position="286"/>
    </location>
    <ligand>
        <name>7-phospho-2-dehydro-3-deoxy-D-arabino-heptonate</name>
        <dbReference type="ChEBI" id="CHEBI:58394"/>
    </ligand>
</feature>
<feature type="binding site" evidence="1">
    <location>
        <position position="286"/>
    </location>
    <ligand>
        <name>Zn(2+)</name>
        <dbReference type="ChEBI" id="CHEBI:29105"/>
        <note>catalytic</note>
    </ligand>
</feature>
<feature type="binding site" evidence="1">
    <location>
        <position position="355"/>
    </location>
    <ligand>
        <name>7-phospho-2-dehydro-3-deoxy-D-arabino-heptonate</name>
        <dbReference type="ChEBI" id="CHEBI:58394"/>
    </ligand>
</feature>
<feature type="binding site" evidence="1">
    <location>
        <begin position="866"/>
        <end position="873"/>
    </location>
    <ligand>
        <name>ATP</name>
        <dbReference type="ChEBI" id="CHEBI:30616"/>
    </ligand>
</feature>
<gene>
    <name evidence="1" type="primary">ARO1</name>
    <name type="ordered locus">PAS_chr3_0506</name>
</gene>
<proteinExistence type="inferred from homology"/>
<dbReference type="EC" id="4.2.3.4" evidence="1"/>
<dbReference type="EC" id="2.5.1.19" evidence="1"/>
<dbReference type="EC" id="2.7.1.71" evidence="1"/>
<dbReference type="EC" id="4.2.1.10" evidence="1"/>
<dbReference type="EC" id="1.1.1.25" evidence="1"/>
<dbReference type="EMBL" id="FN392321">
    <property type="protein sequence ID" value="CAY70554.1"/>
    <property type="molecule type" value="Genomic_DNA"/>
</dbReference>
<dbReference type="RefSeq" id="XP_002492733.1">
    <property type="nucleotide sequence ID" value="XM_002492688.1"/>
</dbReference>
<dbReference type="SMR" id="C4R4R8"/>
<dbReference type="FunCoup" id="C4R4R8">
    <property type="interactions" value="487"/>
</dbReference>
<dbReference type="STRING" id="644223.C4R4R8"/>
<dbReference type="EnsemblFungi" id="CAY70554">
    <property type="protein sequence ID" value="CAY70554"/>
    <property type="gene ID" value="PAS_chr3_0506"/>
</dbReference>
<dbReference type="GeneID" id="8199874"/>
<dbReference type="KEGG" id="ppa:PAS_chr3_0506"/>
<dbReference type="eggNOG" id="KOG0692">
    <property type="taxonomic scope" value="Eukaryota"/>
</dbReference>
<dbReference type="HOGENOM" id="CLU_001201_1_2_1"/>
<dbReference type="InParanoid" id="C4R4R8"/>
<dbReference type="OMA" id="SWANMSW"/>
<dbReference type="OrthoDB" id="197068at2759"/>
<dbReference type="UniPathway" id="UPA00053">
    <property type="reaction ID" value="UER00085"/>
</dbReference>
<dbReference type="UniPathway" id="UPA00053">
    <property type="reaction ID" value="UER00086"/>
</dbReference>
<dbReference type="UniPathway" id="UPA00053">
    <property type="reaction ID" value="UER00087"/>
</dbReference>
<dbReference type="UniPathway" id="UPA00053">
    <property type="reaction ID" value="UER00088"/>
</dbReference>
<dbReference type="UniPathway" id="UPA00053">
    <property type="reaction ID" value="UER00089"/>
</dbReference>
<dbReference type="Proteomes" id="UP000000314">
    <property type="component" value="Chromosome 3"/>
</dbReference>
<dbReference type="GO" id="GO:0005737">
    <property type="term" value="C:cytoplasm"/>
    <property type="evidence" value="ECO:0007669"/>
    <property type="project" value="UniProtKB-SubCell"/>
</dbReference>
<dbReference type="GO" id="GO:0003855">
    <property type="term" value="F:3-dehydroquinate dehydratase activity"/>
    <property type="evidence" value="ECO:0007669"/>
    <property type="project" value="UniProtKB-UniRule"/>
</dbReference>
<dbReference type="GO" id="GO:0003856">
    <property type="term" value="F:3-dehydroquinate synthase activity"/>
    <property type="evidence" value="ECO:0007669"/>
    <property type="project" value="UniProtKB-UniRule"/>
</dbReference>
<dbReference type="GO" id="GO:0003866">
    <property type="term" value="F:3-phosphoshikimate 1-carboxyvinyltransferase activity"/>
    <property type="evidence" value="ECO:0007669"/>
    <property type="project" value="UniProtKB-UniRule"/>
</dbReference>
<dbReference type="GO" id="GO:0005524">
    <property type="term" value="F:ATP binding"/>
    <property type="evidence" value="ECO:0007669"/>
    <property type="project" value="UniProtKB-UniRule"/>
</dbReference>
<dbReference type="GO" id="GO:0046872">
    <property type="term" value="F:metal ion binding"/>
    <property type="evidence" value="ECO:0007669"/>
    <property type="project" value="UniProtKB-UniRule"/>
</dbReference>
<dbReference type="GO" id="GO:0004764">
    <property type="term" value="F:shikimate 3-dehydrogenase (NADP+) activity"/>
    <property type="evidence" value="ECO:0007669"/>
    <property type="project" value="UniProtKB-UniRule"/>
</dbReference>
<dbReference type="GO" id="GO:0004765">
    <property type="term" value="F:shikimate kinase activity"/>
    <property type="evidence" value="ECO:0007669"/>
    <property type="project" value="UniProtKB-UniRule"/>
</dbReference>
<dbReference type="GO" id="GO:0008652">
    <property type="term" value="P:amino acid biosynthetic process"/>
    <property type="evidence" value="ECO:0007669"/>
    <property type="project" value="UniProtKB-KW"/>
</dbReference>
<dbReference type="GO" id="GO:0009073">
    <property type="term" value="P:aromatic amino acid family biosynthetic process"/>
    <property type="evidence" value="ECO:0007669"/>
    <property type="project" value="UniProtKB-UniRule"/>
</dbReference>
<dbReference type="GO" id="GO:0009423">
    <property type="term" value="P:chorismate biosynthetic process"/>
    <property type="evidence" value="ECO:0007669"/>
    <property type="project" value="UniProtKB-UniRule"/>
</dbReference>
<dbReference type="CDD" id="cd00502">
    <property type="entry name" value="DHQase_I"/>
    <property type="match status" value="1"/>
</dbReference>
<dbReference type="CDD" id="cd08195">
    <property type="entry name" value="DHQS"/>
    <property type="match status" value="1"/>
</dbReference>
<dbReference type="CDD" id="cd01556">
    <property type="entry name" value="EPSP_synthase"/>
    <property type="match status" value="1"/>
</dbReference>
<dbReference type="CDD" id="cd01065">
    <property type="entry name" value="NAD_bind_Shikimate_DH"/>
    <property type="match status" value="1"/>
</dbReference>
<dbReference type="CDD" id="cd00464">
    <property type="entry name" value="SK"/>
    <property type="match status" value="1"/>
</dbReference>
<dbReference type="FunFam" id="1.20.1090.10:FF:000007">
    <property type="entry name" value="Pentafunctional AROM polypeptide"/>
    <property type="match status" value="1"/>
</dbReference>
<dbReference type="FunFam" id="3.20.20.70:FF:000135">
    <property type="entry name" value="Pentafunctional AROM polypeptide"/>
    <property type="match status" value="1"/>
</dbReference>
<dbReference type="FunFam" id="3.40.50.1970:FF:000007">
    <property type="entry name" value="Pentafunctional AROM polypeptide"/>
    <property type="match status" value="1"/>
</dbReference>
<dbReference type="FunFam" id="3.40.50.300:FF:001256">
    <property type="entry name" value="Pentafunctional AROM polypeptide"/>
    <property type="match status" value="1"/>
</dbReference>
<dbReference type="FunFam" id="3.65.10.10:FF:000007">
    <property type="entry name" value="Pentafunctional AROM polypeptide"/>
    <property type="match status" value="1"/>
</dbReference>
<dbReference type="FunFam" id="3.65.10.10:FF:000008">
    <property type="entry name" value="Pentafunctional AROM polypeptide"/>
    <property type="match status" value="1"/>
</dbReference>
<dbReference type="Gene3D" id="3.40.50.1970">
    <property type="match status" value="1"/>
</dbReference>
<dbReference type="Gene3D" id="3.20.20.70">
    <property type="entry name" value="Aldolase class I"/>
    <property type="match status" value="1"/>
</dbReference>
<dbReference type="Gene3D" id="1.20.1090.10">
    <property type="entry name" value="Dehydroquinate synthase-like - alpha domain"/>
    <property type="match status" value="1"/>
</dbReference>
<dbReference type="Gene3D" id="3.65.10.10">
    <property type="entry name" value="Enolpyruvate transferase domain"/>
    <property type="match status" value="2"/>
</dbReference>
<dbReference type="Gene3D" id="3.40.50.10860">
    <property type="entry name" value="Leucine Dehydrogenase, chain A, domain 1"/>
    <property type="match status" value="1"/>
</dbReference>
<dbReference type="Gene3D" id="3.40.50.720">
    <property type="entry name" value="NAD(P)-binding Rossmann-like Domain"/>
    <property type="match status" value="1"/>
</dbReference>
<dbReference type="Gene3D" id="3.40.50.300">
    <property type="entry name" value="P-loop containing nucleotide triphosphate hydrolases"/>
    <property type="match status" value="1"/>
</dbReference>
<dbReference type="HAMAP" id="MF_00210">
    <property type="entry name" value="EPSP_synth"/>
    <property type="match status" value="1"/>
</dbReference>
<dbReference type="HAMAP" id="MF_03143">
    <property type="entry name" value="Pentafunct_AroM"/>
    <property type="match status" value="1"/>
</dbReference>
<dbReference type="InterPro" id="IPR018508">
    <property type="entry name" value="3-dehydroquinate_DH_AS"/>
</dbReference>
<dbReference type="InterPro" id="IPR013785">
    <property type="entry name" value="Aldolase_TIM"/>
</dbReference>
<dbReference type="InterPro" id="IPR046346">
    <property type="entry name" value="Aminoacid_DH-like_N_sf"/>
</dbReference>
<dbReference type="InterPro" id="IPR016037">
    <property type="entry name" value="DHQ_synth_AroB"/>
</dbReference>
<dbReference type="InterPro" id="IPR030960">
    <property type="entry name" value="DHQS/DOIS_N"/>
</dbReference>
<dbReference type="InterPro" id="IPR056179">
    <property type="entry name" value="DHQS_C"/>
</dbReference>
<dbReference type="InterPro" id="IPR001381">
    <property type="entry name" value="DHquinase_I"/>
</dbReference>
<dbReference type="InterPro" id="IPR001986">
    <property type="entry name" value="Enolpyruvate_Tfrase_dom"/>
</dbReference>
<dbReference type="InterPro" id="IPR036968">
    <property type="entry name" value="Enolpyruvate_Tfrase_sf"/>
</dbReference>
<dbReference type="InterPro" id="IPR006264">
    <property type="entry name" value="EPSP_synthase"/>
</dbReference>
<dbReference type="InterPro" id="IPR023193">
    <property type="entry name" value="EPSP_synthase_CS"/>
</dbReference>
<dbReference type="InterPro" id="IPR036291">
    <property type="entry name" value="NAD(P)-bd_dom_sf"/>
</dbReference>
<dbReference type="InterPro" id="IPR027417">
    <property type="entry name" value="P-loop_NTPase"/>
</dbReference>
<dbReference type="InterPro" id="IPR008289">
    <property type="entry name" value="Pentafunct_AroM"/>
</dbReference>
<dbReference type="InterPro" id="IPR013792">
    <property type="entry name" value="RNA3'P_cycl/enolpyr_Trfase_a/b"/>
</dbReference>
<dbReference type="InterPro" id="IPR031322">
    <property type="entry name" value="Shikimate/glucono_kinase"/>
</dbReference>
<dbReference type="InterPro" id="IPR013708">
    <property type="entry name" value="Shikimate_DH-bd_N"/>
</dbReference>
<dbReference type="InterPro" id="IPR010110">
    <property type="entry name" value="Shikimate_DH_AroM-type"/>
</dbReference>
<dbReference type="InterPro" id="IPR000623">
    <property type="entry name" value="Shikimate_kinase/TSH1"/>
</dbReference>
<dbReference type="NCBIfam" id="TIGR01356">
    <property type="entry name" value="aroA"/>
    <property type="match status" value="1"/>
</dbReference>
<dbReference type="NCBIfam" id="TIGR01357">
    <property type="entry name" value="aroB"/>
    <property type="match status" value="1"/>
</dbReference>
<dbReference type="NCBIfam" id="TIGR01093">
    <property type="entry name" value="aroD"/>
    <property type="match status" value="1"/>
</dbReference>
<dbReference type="NCBIfam" id="TIGR01809">
    <property type="entry name" value="Shik-DH-AROM"/>
    <property type="match status" value="1"/>
</dbReference>
<dbReference type="PANTHER" id="PTHR21090">
    <property type="entry name" value="AROM/DEHYDROQUINATE SYNTHASE"/>
    <property type="match status" value="1"/>
</dbReference>
<dbReference type="PANTHER" id="PTHR21090:SF5">
    <property type="entry name" value="PENTAFUNCTIONAL AROM POLYPEPTIDE"/>
    <property type="match status" value="1"/>
</dbReference>
<dbReference type="Pfam" id="PF01761">
    <property type="entry name" value="DHQ_synthase"/>
    <property type="match status" value="1"/>
</dbReference>
<dbReference type="Pfam" id="PF24621">
    <property type="entry name" value="DHQS_C"/>
    <property type="match status" value="1"/>
</dbReference>
<dbReference type="Pfam" id="PF01487">
    <property type="entry name" value="DHquinase_I"/>
    <property type="match status" value="1"/>
</dbReference>
<dbReference type="Pfam" id="PF00275">
    <property type="entry name" value="EPSP_synthase"/>
    <property type="match status" value="1"/>
</dbReference>
<dbReference type="Pfam" id="PF08501">
    <property type="entry name" value="Shikimate_dh_N"/>
    <property type="match status" value="1"/>
</dbReference>
<dbReference type="Pfam" id="PF01202">
    <property type="entry name" value="SKI"/>
    <property type="match status" value="1"/>
</dbReference>
<dbReference type="PIRSF" id="PIRSF000514">
    <property type="entry name" value="Pentafunct_AroM"/>
    <property type="match status" value="1"/>
</dbReference>
<dbReference type="PRINTS" id="PR01100">
    <property type="entry name" value="SHIKIMTKNASE"/>
</dbReference>
<dbReference type="SUPFAM" id="SSF51569">
    <property type="entry name" value="Aldolase"/>
    <property type="match status" value="1"/>
</dbReference>
<dbReference type="SUPFAM" id="SSF53223">
    <property type="entry name" value="Aminoacid dehydrogenase-like, N-terminal domain"/>
    <property type="match status" value="1"/>
</dbReference>
<dbReference type="SUPFAM" id="SSF56796">
    <property type="entry name" value="Dehydroquinate synthase-like"/>
    <property type="match status" value="1"/>
</dbReference>
<dbReference type="SUPFAM" id="SSF55205">
    <property type="entry name" value="EPT/RTPC-like"/>
    <property type="match status" value="1"/>
</dbReference>
<dbReference type="SUPFAM" id="SSF51735">
    <property type="entry name" value="NAD(P)-binding Rossmann-fold domains"/>
    <property type="match status" value="1"/>
</dbReference>
<dbReference type="SUPFAM" id="SSF52540">
    <property type="entry name" value="P-loop containing nucleoside triphosphate hydrolases"/>
    <property type="match status" value="1"/>
</dbReference>
<dbReference type="PROSITE" id="PS01028">
    <property type="entry name" value="DEHYDROQUINASE_I"/>
    <property type="match status" value="1"/>
</dbReference>
<dbReference type="PROSITE" id="PS00104">
    <property type="entry name" value="EPSP_SYNTHASE_1"/>
    <property type="match status" value="1"/>
</dbReference>
<dbReference type="PROSITE" id="PS00885">
    <property type="entry name" value="EPSP_SYNTHASE_2"/>
    <property type="match status" value="1"/>
</dbReference>
<organism>
    <name type="scientific">Komagataella phaffii (strain GS115 / ATCC 20864)</name>
    <name type="common">Yeast</name>
    <name type="synonym">Pichia pastoris</name>
    <dbReference type="NCBI Taxonomy" id="644223"/>
    <lineage>
        <taxon>Eukaryota</taxon>
        <taxon>Fungi</taxon>
        <taxon>Dikarya</taxon>
        <taxon>Ascomycota</taxon>
        <taxon>Saccharomycotina</taxon>
        <taxon>Pichiomycetes</taxon>
        <taxon>Pichiales</taxon>
        <taxon>Pichiaceae</taxon>
        <taxon>Komagataella</taxon>
    </lineage>
</organism>
<comment type="function">
    <text evidence="1">The AROM polypeptide catalyzes 5 consecutive enzymatic reactions in prechorismate polyaromatic amino acid biosynthesis.</text>
</comment>
<comment type="catalytic activity">
    <reaction evidence="1">
        <text>7-phospho-2-dehydro-3-deoxy-D-arabino-heptonate = 3-dehydroquinate + phosphate</text>
        <dbReference type="Rhea" id="RHEA:21968"/>
        <dbReference type="ChEBI" id="CHEBI:32364"/>
        <dbReference type="ChEBI" id="CHEBI:43474"/>
        <dbReference type="ChEBI" id="CHEBI:58394"/>
        <dbReference type="EC" id="4.2.3.4"/>
    </reaction>
</comment>
<comment type="catalytic activity">
    <reaction evidence="1">
        <text>3-dehydroquinate = 3-dehydroshikimate + H2O</text>
        <dbReference type="Rhea" id="RHEA:21096"/>
        <dbReference type="ChEBI" id="CHEBI:15377"/>
        <dbReference type="ChEBI" id="CHEBI:16630"/>
        <dbReference type="ChEBI" id="CHEBI:32364"/>
        <dbReference type="EC" id="4.2.1.10"/>
    </reaction>
</comment>
<comment type="catalytic activity">
    <reaction evidence="1">
        <text>shikimate + NADP(+) = 3-dehydroshikimate + NADPH + H(+)</text>
        <dbReference type="Rhea" id="RHEA:17737"/>
        <dbReference type="ChEBI" id="CHEBI:15378"/>
        <dbReference type="ChEBI" id="CHEBI:16630"/>
        <dbReference type="ChEBI" id="CHEBI:36208"/>
        <dbReference type="ChEBI" id="CHEBI:57783"/>
        <dbReference type="ChEBI" id="CHEBI:58349"/>
        <dbReference type="EC" id="1.1.1.25"/>
    </reaction>
</comment>
<comment type="catalytic activity">
    <reaction evidence="1">
        <text>shikimate + ATP = 3-phosphoshikimate + ADP + H(+)</text>
        <dbReference type="Rhea" id="RHEA:13121"/>
        <dbReference type="ChEBI" id="CHEBI:15378"/>
        <dbReference type="ChEBI" id="CHEBI:30616"/>
        <dbReference type="ChEBI" id="CHEBI:36208"/>
        <dbReference type="ChEBI" id="CHEBI:145989"/>
        <dbReference type="ChEBI" id="CHEBI:456216"/>
        <dbReference type="EC" id="2.7.1.71"/>
    </reaction>
</comment>
<comment type="catalytic activity">
    <reaction evidence="1">
        <text>3-phosphoshikimate + phosphoenolpyruvate = 5-O-(1-carboxyvinyl)-3-phosphoshikimate + phosphate</text>
        <dbReference type="Rhea" id="RHEA:21256"/>
        <dbReference type="ChEBI" id="CHEBI:43474"/>
        <dbReference type="ChEBI" id="CHEBI:57701"/>
        <dbReference type="ChEBI" id="CHEBI:58702"/>
        <dbReference type="ChEBI" id="CHEBI:145989"/>
        <dbReference type="EC" id="2.5.1.19"/>
    </reaction>
</comment>
<comment type="cofactor">
    <cofactor>
        <name>Zn(2+)</name>
        <dbReference type="ChEBI" id="CHEBI:29105"/>
    </cofactor>
    <text>Binds 2 Zn(2+) ions per subunit.</text>
</comment>
<comment type="pathway">
    <text evidence="1">Metabolic intermediate biosynthesis; chorismate biosynthesis; chorismate from D-erythrose 4-phosphate and phosphoenolpyruvate: step 2/7.</text>
</comment>
<comment type="pathway">
    <text evidence="1">Metabolic intermediate biosynthesis; chorismate biosynthesis; chorismate from D-erythrose 4-phosphate and phosphoenolpyruvate: step 3/7.</text>
</comment>
<comment type="pathway">
    <text evidence="1">Metabolic intermediate biosynthesis; chorismate biosynthesis; chorismate from D-erythrose 4-phosphate and phosphoenolpyruvate: step 4/7.</text>
</comment>
<comment type="pathway">
    <text evidence="1">Metabolic intermediate biosynthesis; chorismate biosynthesis; chorismate from D-erythrose 4-phosphate and phosphoenolpyruvate: step 5/7.</text>
</comment>
<comment type="pathway">
    <text evidence="1">Metabolic intermediate biosynthesis; chorismate biosynthesis; chorismate from D-erythrose 4-phosphate and phosphoenolpyruvate: step 6/7.</text>
</comment>
<comment type="subunit">
    <text evidence="1">Homodimer.</text>
</comment>
<comment type="subcellular location">
    <subcellularLocation>
        <location evidence="1">Cytoplasm</location>
    </subcellularLocation>
</comment>
<comment type="similarity">
    <text evidence="1">In the N-terminal section; belongs to the sugar phosphate cyclases superfamily. Dehydroquinate synthase family.</text>
</comment>
<comment type="similarity">
    <text evidence="1">In the 2nd section; belongs to the EPSP synthase family.</text>
</comment>
<comment type="similarity">
    <text evidence="1">In the 3rd section; belongs to the shikimate kinase family.</text>
</comment>
<comment type="similarity">
    <text evidence="1">In the 4th section; belongs to the type-I 3-dehydroquinase family.</text>
</comment>
<comment type="similarity">
    <text evidence="1">In the C-terminal section; belongs to the shikimate dehydrogenase family.</text>
</comment>
<sequence length="1545" mass="170055">MSGLIEKVSILRNDSIHVGYNMSSHIVDEILTKKASSTYVLITDSNIVKMGHLQTFVDEFNRLIPSKRPGSRILTYVVPPGEANKNRATKAAIEDYLLEKGCTRDTFILAIGGGVIGDMIGYVAATFMRGVRFVQIPTSLLAMVDSSIGGKTAIDTPLGKNFIGAFWQPDYVFVDVAFLETLPEREFINGMAEVVKTAAIWNEQEFSRLETYSKRFLKVIRDRRVDDSVDLTSLKEHIIKLVLESIKVKAEVVTLDEREGGLRNLLNFGHSIGHAIEAILTPQALHGECVSIGAVLEAELSRYLGILSPVAVSRLYKCFAAYGLPVSIADKLVQKRTNGKKCPVDVLLQKMAIDKKNDGSKKKVVLLSKIGKCYEPKASYVNDEDLRFVLTDEVLVKDFNSAPSTAVVVPPGSKSISNRALILAALGKGECKIKNLLHSDDTEHMLNAVAALKGADISFDDNGETVVVTGNGGNFTATDAEIYLGNAGTASRFLTSVASIVKPDSNTTHVILTGNARMQERPIGPLVDALRTNGSDIEYLNREGSLPLKIKSGNGLKGGRIELAATISSQYVSSVLMCAPYASEPVTLSLVGGKPISLLYVDMTIAMMKSFGIEVTKSTTEPYTYHVPQGHYVNPAEYVIESDASSATYPLAFAAMNGTQVTIPNIGSSSLQGDARFAVDVLKPMGCKVEQTATSTTVQGPTKGTLKPLPLVDMEPMTDAFLTASVVAAIANDTNQSTSIVGISNQRVKECNRIEAMITQLAKFGVRAKELEDGIEVFGIDYHHLKTPSDGVYTYDDHRVAMSLSLLAGLAESPVLIQERHCTGKTWPGWWDILHTTFNVELDGHEAVVETTTAKANEDKSIIVIGMRAAGKSTLSHVIAQTLKGFKVVDLDDVFVEKYGDIREFIKENSWELFREKEAMIAKEAFKNYSKNTVISTGGGIVETEASRKLLKQQMKDGHIVLHLHRDIEETVVFLSQDKTRPAYVDEINQVWERRKNLYKECSNYFFFSPHCQTEREFFTLKKTFSKFINRITGGAVPSIPNGRSAFVCLTYEDLAPVSSKLTRVTNGCDAVELRVDLLKQHDSHFISNQIGILRNQTSVPILFTIRTKSQGGRFPDDSYEDIERLLNLAIKLGVEYVDLELSLPESLLDSVASKRQFTKIIGSHHDFSGTVKWNNVEWENKYLLALKLNVDIIKFVGTATSLNDNWELEHFRSLHTDKPFIGINMGPLGKVSRVFNTILTPVTHKDLPSSAAPGQLTLKEINEYFGQFGGSSRKKFYIVGKPISHSKSPELHKTFYDEFGLSHTFDKFETDDAAKVFNDLVKGNDELGGCAVTIPLKIDMLKYVNELTDSAKSIGALNTIIPIGDGRFIGDNTDWIGIRDSLHQAGCEIAPESSVGLVVGGGGTSRAAVYALHQMGCSKIYMLNRTPSKLSEIKNHFPSNYNIHIVDSLDAIDEDDKLDAAVSTVPGDKPLDDQLISLLKKLLEKKRGHAVLLEAAYKPRETPIMALAFSRGWKVVPGSKMLVNQGIEQFYKWTGYQFSSHIDL</sequence>
<evidence type="ECO:0000255" key="1">
    <source>
        <dbReference type="HAMAP-Rule" id="MF_03143"/>
    </source>
</evidence>
<name>ARO1_KOMPG</name>
<protein>
    <recommendedName>
        <fullName evidence="1">Pentafunctional AROM polypeptide</fullName>
    </recommendedName>
    <domain>
        <recommendedName>
            <fullName evidence="1">3-dehydroquinate synthase</fullName>
            <shortName evidence="1">DHQS</shortName>
            <ecNumber evidence="1">4.2.3.4</ecNumber>
        </recommendedName>
    </domain>
    <domain>
        <recommendedName>
            <fullName evidence="1">3-phosphoshikimate 1-carboxyvinyltransferase</fullName>
            <ecNumber evidence="1">2.5.1.19</ecNumber>
        </recommendedName>
        <alternativeName>
            <fullName evidence="1">5-enolpyruvylshikimate-3-phosphate synthase</fullName>
            <shortName evidence="1">EPSP synthase</shortName>
            <shortName evidence="1">EPSPS</shortName>
        </alternativeName>
    </domain>
    <domain>
        <recommendedName>
            <fullName evidence="1">Shikimate kinase</fullName>
            <shortName evidence="1">SK</shortName>
            <ecNumber evidence="1">2.7.1.71</ecNumber>
        </recommendedName>
    </domain>
    <domain>
        <recommendedName>
            <fullName evidence="1">3-dehydroquinate dehydratase</fullName>
            <shortName evidence="1">3-dehydroquinase</shortName>
            <ecNumber evidence="1">4.2.1.10</ecNumber>
        </recommendedName>
    </domain>
    <domain>
        <recommendedName>
            <fullName evidence="1">Shikimate dehydrogenase</fullName>
            <ecNumber evidence="1">1.1.1.25</ecNumber>
        </recommendedName>
    </domain>
</protein>